<dbReference type="EC" id="1.2.1.10" evidence="1"/>
<dbReference type="EMBL" id="CP000267">
    <property type="protein sequence ID" value="ABD68207.1"/>
    <property type="molecule type" value="Genomic_DNA"/>
</dbReference>
<dbReference type="RefSeq" id="WP_011462780.1">
    <property type="nucleotide sequence ID" value="NC_007908.1"/>
</dbReference>
<dbReference type="SMR" id="Q221U6"/>
<dbReference type="STRING" id="338969.Rfer_0455"/>
<dbReference type="KEGG" id="rfr:Rfer_0455"/>
<dbReference type="eggNOG" id="COG4569">
    <property type="taxonomic scope" value="Bacteria"/>
</dbReference>
<dbReference type="HOGENOM" id="CLU_062208_0_0_4"/>
<dbReference type="OrthoDB" id="9786743at2"/>
<dbReference type="Proteomes" id="UP000008332">
    <property type="component" value="Chromosome"/>
</dbReference>
<dbReference type="GO" id="GO:0008774">
    <property type="term" value="F:acetaldehyde dehydrogenase (acetylating) activity"/>
    <property type="evidence" value="ECO:0007669"/>
    <property type="project" value="UniProtKB-UniRule"/>
</dbReference>
<dbReference type="GO" id="GO:0051287">
    <property type="term" value="F:NAD binding"/>
    <property type="evidence" value="ECO:0007669"/>
    <property type="project" value="UniProtKB-UniRule"/>
</dbReference>
<dbReference type="GO" id="GO:0009056">
    <property type="term" value="P:catabolic process"/>
    <property type="evidence" value="ECO:0007669"/>
    <property type="project" value="UniProtKB-KW"/>
</dbReference>
<dbReference type="CDD" id="cd23933">
    <property type="entry name" value="ALDH_C"/>
    <property type="match status" value="1"/>
</dbReference>
<dbReference type="Gene3D" id="3.30.360.10">
    <property type="entry name" value="Dihydrodipicolinate Reductase, domain 2"/>
    <property type="match status" value="1"/>
</dbReference>
<dbReference type="Gene3D" id="3.40.50.720">
    <property type="entry name" value="NAD(P)-binding Rossmann-like Domain"/>
    <property type="match status" value="1"/>
</dbReference>
<dbReference type="HAMAP" id="MF_01657">
    <property type="entry name" value="Ac_ald_DH_ac"/>
    <property type="match status" value="1"/>
</dbReference>
<dbReference type="InterPro" id="IPR003361">
    <property type="entry name" value="Acetaldehyde_dehydrogenase"/>
</dbReference>
<dbReference type="InterPro" id="IPR015426">
    <property type="entry name" value="Acetylaldehyde_DH_C"/>
</dbReference>
<dbReference type="InterPro" id="IPR036291">
    <property type="entry name" value="NAD(P)-bd_dom_sf"/>
</dbReference>
<dbReference type="InterPro" id="IPR000534">
    <property type="entry name" value="Semialdehyde_DH_NAD-bd"/>
</dbReference>
<dbReference type="NCBIfam" id="TIGR03215">
    <property type="entry name" value="ac_ald_DH_ac"/>
    <property type="match status" value="1"/>
</dbReference>
<dbReference type="NCBIfam" id="NF006157">
    <property type="entry name" value="PRK08300.1"/>
    <property type="match status" value="1"/>
</dbReference>
<dbReference type="Pfam" id="PF09290">
    <property type="entry name" value="AcetDehyd-dimer"/>
    <property type="match status" value="1"/>
</dbReference>
<dbReference type="PIRSF" id="PIRSF015689">
    <property type="entry name" value="Actaldh_dh_actl"/>
    <property type="match status" value="1"/>
</dbReference>
<dbReference type="SMART" id="SM00859">
    <property type="entry name" value="Semialdhyde_dh"/>
    <property type="match status" value="1"/>
</dbReference>
<dbReference type="SUPFAM" id="SSF55347">
    <property type="entry name" value="Glyceraldehyde-3-phosphate dehydrogenase-like, C-terminal domain"/>
    <property type="match status" value="1"/>
</dbReference>
<dbReference type="SUPFAM" id="SSF51735">
    <property type="entry name" value="NAD(P)-binding Rossmann-fold domains"/>
    <property type="match status" value="1"/>
</dbReference>
<organism>
    <name type="scientific">Albidiferax ferrireducens (strain ATCC BAA-621 / DSM 15236 / T118)</name>
    <name type="common">Rhodoferax ferrireducens</name>
    <dbReference type="NCBI Taxonomy" id="338969"/>
    <lineage>
        <taxon>Bacteria</taxon>
        <taxon>Pseudomonadati</taxon>
        <taxon>Pseudomonadota</taxon>
        <taxon>Betaproteobacteria</taxon>
        <taxon>Burkholderiales</taxon>
        <taxon>Comamonadaceae</taxon>
        <taxon>Rhodoferax</taxon>
    </lineage>
</organism>
<sequence length="306" mass="32752">MSKKIKCALIGPGNIGTDLLYKLRRSPVLDPVWMVGVDPTSEGLKRARELGLKTTEQGVDGLLPHVLADGVQIAFDATSAYVHAENSRRLTELGVLVIDLTPAAIGPFCVPPVNLLALVGRRVMNVNMVTCGGQATIPMIAAISRVQPVRYGEIVATISSKSAGPGTRKNIDEFTRTTSRAIEQVGGAAKGKAIIIINPAEPPLVMRDTVHCLTETEPDQAKITASIHAMIKEVQKYVPGYKLVNGPVFDDKRVSVFLEVEGLGDFLPKYSGNLDIMTAAAARTAEMFAEEILAGRINLQPMATVA</sequence>
<proteinExistence type="inferred from homology"/>
<protein>
    <recommendedName>
        <fullName evidence="1">Acetaldehyde dehydrogenase</fullName>
        <ecNumber evidence="1">1.2.1.10</ecNumber>
    </recommendedName>
    <alternativeName>
        <fullName evidence="1">Acetaldehyde dehydrogenase [acetylating]</fullName>
    </alternativeName>
</protein>
<reference key="1">
    <citation type="submission" date="2006-02" db="EMBL/GenBank/DDBJ databases">
        <title>Complete sequence of chromosome of Rhodoferax ferrireducens DSM 15236.</title>
        <authorList>
            <person name="Copeland A."/>
            <person name="Lucas S."/>
            <person name="Lapidus A."/>
            <person name="Barry K."/>
            <person name="Detter J.C."/>
            <person name="Glavina del Rio T."/>
            <person name="Hammon N."/>
            <person name="Israni S."/>
            <person name="Pitluck S."/>
            <person name="Brettin T."/>
            <person name="Bruce D."/>
            <person name="Han C."/>
            <person name="Tapia R."/>
            <person name="Gilna P."/>
            <person name="Kiss H."/>
            <person name="Schmutz J."/>
            <person name="Larimer F."/>
            <person name="Land M."/>
            <person name="Kyrpides N."/>
            <person name="Ivanova N."/>
            <person name="Richardson P."/>
        </authorList>
    </citation>
    <scope>NUCLEOTIDE SEQUENCE [LARGE SCALE GENOMIC DNA]</scope>
    <source>
        <strain>ATCC BAA-621 / DSM 15236 / T118</strain>
    </source>
</reference>
<comment type="catalytic activity">
    <reaction evidence="1">
        <text>acetaldehyde + NAD(+) + CoA = acetyl-CoA + NADH + H(+)</text>
        <dbReference type="Rhea" id="RHEA:23288"/>
        <dbReference type="ChEBI" id="CHEBI:15343"/>
        <dbReference type="ChEBI" id="CHEBI:15378"/>
        <dbReference type="ChEBI" id="CHEBI:57287"/>
        <dbReference type="ChEBI" id="CHEBI:57288"/>
        <dbReference type="ChEBI" id="CHEBI:57540"/>
        <dbReference type="ChEBI" id="CHEBI:57945"/>
        <dbReference type="EC" id="1.2.1.10"/>
    </reaction>
</comment>
<comment type="similarity">
    <text evidence="1">Belongs to the acetaldehyde dehydrogenase family.</text>
</comment>
<feature type="chain" id="PRO_0000387733" description="Acetaldehyde dehydrogenase">
    <location>
        <begin position="1"/>
        <end position="306"/>
    </location>
</feature>
<feature type="active site" description="Acyl-thioester intermediate" evidence="1">
    <location>
        <position position="131"/>
    </location>
</feature>
<feature type="binding site" evidence="1">
    <location>
        <begin position="162"/>
        <end position="170"/>
    </location>
    <ligand>
        <name>NAD(+)</name>
        <dbReference type="ChEBI" id="CHEBI:57540"/>
    </ligand>
</feature>
<feature type="binding site" evidence="1">
    <location>
        <position position="273"/>
    </location>
    <ligand>
        <name>NAD(+)</name>
        <dbReference type="ChEBI" id="CHEBI:57540"/>
    </ligand>
</feature>
<accession>Q221U6</accession>
<keyword id="KW-0058">Aromatic hydrocarbons catabolism</keyword>
<keyword id="KW-0520">NAD</keyword>
<keyword id="KW-0560">Oxidoreductase</keyword>
<keyword id="KW-1185">Reference proteome</keyword>
<evidence type="ECO:0000255" key="1">
    <source>
        <dbReference type="HAMAP-Rule" id="MF_01657"/>
    </source>
</evidence>
<gene>
    <name type="ordered locus">Rfer_0455</name>
</gene>
<name>ACDH_ALBFT</name>